<name>IF2_BORAP</name>
<feature type="chain" id="PRO_1000008205" description="Translation initiation factor IF-2">
    <location>
        <begin position="1"/>
        <end position="782"/>
    </location>
</feature>
<feature type="domain" description="tr-type G">
    <location>
        <begin position="280"/>
        <end position="453"/>
    </location>
</feature>
<feature type="region of interest" description="Disordered" evidence="3">
    <location>
        <begin position="1"/>
        <end position="106"/>
    </location>
</feature>
<feature type="region of interest" description="Disordered" evidence="3">
    <location>
        <begin position="132"/>
        <end position="174"/>
    </location>
</feature>
<feature type="region of interest" description="G1" evidence="1">
    <location>
        <begin position="289"/>
        <end position="296"/>
    </location>
</feature>
<feature type="region of interest" description="G2" evidence="1">
    <location>
        <begin position="314"/>
        <end position="318"/>
    </location>
</feature>
<feature type="region of interest" description="G3" evidence="1">
    <location>
        <begin position="335"/>
        <end position="338"/>
    </location>
</feature>
<feature type="region of interest" description="G4" evidence="1">
    <location>
        <begin position="389"/>
        <end position="392"/>
    </location>
</feature>
<feature type="region of interest" description="G5" evidence="1">
    <location>
        <begin position="425"/>
        <end position="427"/>
    </location>
</feature>
<feature type="compositionally biased region" description="Basic and acidic residues" evidence="3">
    <location>
        <begin position="1"/>
        <end position="14"/>
    </location>
</feature>
<feature type="compositionally biased region" description="Basic residues" evidence="3">
    <location>
        <begin position="15"/>
        <end position="25"/>
    </location>
</feature>
<feature type="compositionally biased region" description="Polar residues" evidence="3">
    <location>
        <begin position="31"/>
        <end position="43"/>
    </location>
</feature>
<feature type="compositionally biased region" description="Basic and acidic residues" evidence="3">
    <location>
        <begin position="44"/>
        <end position="61"/>
    </location>
</feature>
<feature type="compositionally biased region" description="Polar residues" evidence="3">
    <location>
        <begin position="86"/>
        <end position="106"/>
    </location>
</feature>
<feature type="compositionally biased region" description="Polar residues" evidence="3">
    <location>
        <begin position="133"/>
        <end position="142"/>
    </location>
</feature>
<feature type="compositionally biased region" description="Basic and acidic residues" evidence="3">
    <location>
        <begin position="143"/>
        <end position="159"/>
    </location>
</feature>
<feature type="binding site" evidence="2">
    <location>
        <begin position="289"/>
        <end position="296"/>
    </location>
    <ligand>
        <name>GTP</name>
        <dbReference type="ChEBI" id="CHEBI:37565"/>
    </ligand>
</feature>
<feature type="binding site" evidence="2">
    <location>
        <begin position="335"/>
        <end position="339"/>
    </location>
    <ligand>
        <name>GTP</name>
        <dbReference type="ChEBI" id="CHEBI:37565"/>
    </ligand>
</feature>
<feature type="binding site" evidence="2">
    <location>
        <begin position="389"/>
        <end position="392"/>
    </location>
    <ligand>
        <name>GTP</name>
        <dbReference type="ChEBI" id="CHEBI:37565"/>
    </ligand>
</feature>
<feature type="sequence conflict" description="In Ref. 2; AEL70018." evidence="4" ref="2">
    <original>D</original>
    <variation>DGRTGGYSQNRDGRTGGYSQNRDGRTGGYSQNRD</variation>
    <location>
        <position position="92"/>
    </location>
</feature>
<organism>
    <name type="scientific">Borreliella afzelii (strain PKo)</name>
    <name type="common">Borrelia afzelii</name>
    <dbReference type="NCBI Taxonomy" id="390236"/>
    <lineage>
        <taxon>Bacteria</taxon>
        <taxon>Pseudomonadati</taxon>
        <taxon>Spirochaetota</taxon>
        <taxon>Spirochaetia</taxon>
        <taxon>Spirochaetales</taxon>
        <taxon>Borreliaceae</taxon>
        <taxon>Borreliella</taxon>
    </lineage>
</organism>
<dbReference type="EMBL" id="CP000395">
    <property type="protein sequence ID" value="ABH02078.1"/>
    <property type="molecule type" value="Genomic_DNA"/>
</dbReference>
<dbReference type="EMBL" id="CP002933">
    <property type="protein sequence ID" value="AEL70018.1"/>
    <property type="molecule type" value="Genomic_DNA"/>
</dbReference>
<dbReference type="RefSeq" id="WP_011601238.1">
    <property type="nucleotide sequence ID" value="NC_008277.1"/>
</dbReference>
<dbReference type="SMR" id="Q0SM50"/>
<dbReference type="STRING" id="29518.BLA32_00215"/>
<dbReference type="KEGG" id="baf:BAPKO_0854"/>
<dbReference type="KEGG" id="bafz:BafPKo_0829"/>
<dbReference type="PATRIC" id="fig|390236.22.peg.790"/>
<dbReference type="eggNOG" id="COG0532">
    <property type="taxonomic scope" value="Bacteria"/>
</dbReference>
<dbReference type="HOGENOM" id="CLU_006301_1_1_12"/>
<dbReference type="OrthoDB" id="9811804at2"/>
<dbReference type="Proteomes" id="UP000005216">
    <property type="component" value="Chromosome"/>
</dbReference>
<dbReference type="GO" id="GO:0005829">
    <property type="term" value="C:cytosol"/>
    <property type="evidence" value="ECO:0007669"/>
    <property type="project" value="TreeGrafter"/>
</dbReference>
<dbReference type="GO" id="GO:0005525">
    <property type="term" value="F:GTP binding"/>
    <property type="evidence" value="ECO:0007669"/>
    <property type="project" value="UniProtKB-KW"/>
</dbReference>
<dbReference type="GO" id="GO:0003924">
    <property type="term" value="F:GTPase activity"/>
    <property type="evidence" value="ECO:0007669"/>
    <property type="project" value="UniProtKB-UniRule"/>
</dbReference>
<dbReference type="GO" id="GO:0003743">
    <property type="term" value="F:translation initiation factor activity"/>
    <property type="evidence" value="ECO:0007669"/>
    <property type="project" value="UniProtKB-UniRule"/>
</dbReference>
<dbReference type="CDD" id="cd01887">
    <property type="entry name" value="IF2_eIF5B"/>
    <property type="match status" value="1"/>
</dbReference>
<dbReference type="CDD" id="cd03702">
    <property type="entry name" value="IF2_mtIF2_II"/>
    <property type="match status" value="1"/>
</dbReference>
<dbReference type="CDD" id="cd03692">
    <property type="entry name" value="mtIF2_IVc"/>
    <property type="match status" value="1"/>
</dbReference>
<dbReference type="FunFam" id="2.40.30.10:FF:000008">
    <property type="entry name" value="Translation initiation factor IF-2"/>
    <property type="match status" value="1"/>
</dbReference>
<dbReference type="FunFam" id="3.40.50.10050:FF:000001">
    <property type="entry name" value="Translation initiation factor IF-2"/>
    <property type="match status" value="1"/>
</dbReference>
<dbReference type="FunFam" id="3.40.50.300:FF:000019">
    <property type="entry name" value="Translation initiation factor IF-2"/>
    <property type="match status" value="1"/>
</dbReference>
<dbReference type="Gene3D" id="3.40.50.300">
    <property type="entry name" value="P-loop containing nucleotide triphosphate hydrolases"/>
    <property type="match status" value="1"/>
</dbReference>
<dbReference type="Gene3D" id="2.40.30.10">
    <property type="entry name" value="Translation factors"/>
    <property type="match status" value="2"/>
</dbReference>
<dbReference type="Gene3D" id="3.40.50.10050">
    <property type="entry name" value="Translation initiation factor IF- 2, domain 3"/>
    <property type="match status" value="1"/>
</dbReference>
<dbReference type="HAMAP" id="MF_00100_B">
    <property type="entry name" value="IF_2_B"/>
    <property type="match status" value="1"/>
</dbReference>
<dbReference type="InterPro" id="IPR053905">
    <property type="entry name" value="EF-G-like_DII"/>
</dbReference>
<dbReference type="InterPro" id="IPR044145">
    <property type="entry name" value="IF2_II"/>
</dbReference>
<dbReference type="InterPro" id="IPR006847">
    <property type="entry name" value="IF2_N"/>
</dbReference>
<dbReference type="InterPro" id="IPR027417">
    <property type="entry name" value="P-loop_NTPase"/>
</dbReference>
<dbReference type="InterPro" id="IPR005225">
    <property type="entry name" value="Small_GTP-bd"/>
</dbReference>
<dbReference type="InterPro" id="IPR000795">
    <property type="entry name" value="T_Tr_GTP-bd_dom"/>
</dbReference>
<dbReference type="InterPro" id="IPR000178">
    <property type="entry name" value="TF_IF2_bacterial-like"/>
</dbReference>
<dbReference type="InterPro" id="IPR015760">
    <property type="entry name" value="TIF_IF2"/>
</dbReference>
<dbReference type="InterPro" id="IPR023115">
    <property type="entry name" value="TIF_IF2_dom3"/>
</dbReference>
<dbReference type="InterPro" id="IPR036925">
    <property type="entry name" value="TIF_IF2_dom3_sf"/>
</dbReference>
<dbReference type="InterPro" id="IPR009000">
    <property type="entry name" value="Transl_B-barrel_sf"/>
</dbReference>
<dbReference type="NCBIfam" id="TIGR00487">
    <property type="entry name" value="IF-2"/>
    <property type="match status" value="1"/>
</dbReference>
<dbReference type="NCBIfam" id="TIGR00231">
    <property type="entry name" value="small_GTP"/>
    <property type="match status" value="1"/>
</dbReference>
<dbReference type="PANTHER" id="PTHR43381:SF5">
    <property type="entry name" value="TR-TYPE G DOMAIN-CONTAINING PROTEIN"/>
    <property type="match status" value="1"/>
</dbReference>
<dbReference type="PANTHER" id="PTHR43381">
    <property type="entry name" value="TRANSLATION INITIATION FACTOR IF-2-RELATED"/>
    <property type="match status" value="1"/>
</dbReference>
<dbReference type="Pfam" id="PF22042">
    <property type="entry name" value="EF-G_D2"/>
    <property type="match status" value="1"/>
</dbReference>
<dbReference type="Pfam" id="PF00009">
    <property type="entry name" value="GTP_EFTU"/>
    <property type="match status" value="1"/>
</dbReference>
<dbReference type="Pfam" id="PF11987">
    <property type="entry name" value="IF-2"/>
    <property type="match status" value="1"/>
</dbReference>
<dbReference type="Pfam" id="PF04760">
    <property type="entry name" value="IF2_N"/>
    <property type="match status" value="1"/>
</dbReference>
<dbReference type="SUPFAM" id="SSF52156">
    <property type="entry name" value="Initiation factor IF2/eIF5b, domain 3"/>
    <property type="match status" value="1"/>
</dbReference>
<dbReference type="SUPFAM" id="SSF52540">
    <property type="entry name" value="P-loop containing nucleoside triphosphate hydrolases"/>
    <property type="match status" value="1"/>
</dbReference>
<dbReference type="SUPFAM" id="SSF50447">
    <property type="entry name" value="Translation proteins"/>
    <property type="match status" value="2"/>
</dbReference>
<dbReference type="PROSITE" id="PS51722">
    <property type="entry name" value="G_TR_2"/>
    <property type="match status" value="1"/>
</dbReference>
<evidence type="ECO:0000250" key="1"/>
<evidence type="ECO:0000255" key="2">
    <source>
        <dbReference type="HAMAP-Rule" id="MF_00100"/>
    </source>
</evidence>
<evidence type="ECO:0000256" key="3">
    <source>
        <dbReference type="SAM" id="MobiDB-lite"/>
    </source>
</evidence>
<evidence type="ECO:0000305" key="4"/>
<keyword id="KW-0963">Cytoplasm</keyword>
<keyword id="KW-0342">GTP-binding</keyword>
<keyword id="KW-0396">Initiation factor</keyword>
<keyword id="KW-0547">Nucleotide-binding</keyword>
<keyword id="KW-0648">Protein biosynthesis</keyword>
<gene>
    <name evidence="2" type="primary">infB</name>
    <name type="ordered locus">BAPKO_0854</name>
    <name type="ordered locus">BafPKo_0829</name>
</gene>
<comment type="function">
    <text evidence="2">One of the essential components for the initiation of protein synthesis. Protects formylmethionyl-tRNA from spontaneous hydrolysis and promotes its binding to the 30S ribosomal subunits. Also involved in the hydrolysis of GTP during the formation of the 70S ribosomal complex.</text>
</comment>
<comment type="subcellular location">
    <subcellularLocation>
        <location evidence="2">Cytoplasm</location>
    </subcellularLocation>
</comment>
<comment type="similarity">
    <text evidence="2">Belongs to the TRAFAC class translation factor GTPase superfamily. Classic translation factor GTPase family. IF-2 subfamily.</text>
</comment>
<reference key="1">
    <citation type="journal article" date="2006" name="BMC Genomics">
        <title>Comparative genome analysis: selection pressure on the Borrelia vls cassettes is essential for infectivity.</title>
        <authorList>
            <person name="Gloeckner G."/>
            <person name="Schulte-Spechtel U."/>
            <person name="Schilhabel M."/>
            <person name="Felder M."/>
            <person name="Suehnel J."/>
            <person name="Wilske B."/>
            <person name="Platzer M."/>
        </authorList>
    </citation>
    <scope>NUCLEOTIDE SEQUENCE [LARGE SCALE GENOMIC DNA]</scope>
    <source>
        <strain>PKo</strain>
    </source>
</reference>
<reference key="2">
    <citation type="journal article" date="2011" name="J. Bacteriol.">
        <title>Whole-genome sequences of two Borrelia afzelii and two Borrelia garinii Lyme disease agent isolates.</title>
        <authorList>
            <person name="Casjens S.R."/>
            <person name="Mongodin E.F."/>
            <person name="Qiu W.G."/>
            <person name="Dunn J.J."/>
            <person name="Luft B.J."/>
            <person name="Fraser-Liggett C.M."/>
            <person name="Schutzer S.E."/>
        </authorList>
    </citation>
    <scope>NUCLEOTIDE SEQUENCE [LARGE SCALE GENOMIC DNA]</scope>
    <source>
        <strain>PKo</strain>
    </source>
</reference>
<sequence>MSKNIDDKNEDGKKIKIIKLRKKVVKIVTHNDLSGKNNPSGSTDLHKHNNKVEYSHSRDGRTGGYSQNRDGRTGGYSQNRDGRTGGYSQNRDSLTSQYQGSTKKTYVAKNNTQNKYTTSVSFRRVIKTKVPSIVSSASSTDSENSKELNRKLGEKKKQQQESQKSYKRKKAETESKTIEQKVFEQLQKKKRENLANPIPKSIDIMGSITVSDLARKMNLKSSDLIAKLMALGVMVTINEKIDSDTATILVEEYGSKVNVVSIYDETVIEEEVEDQSKRIEKPPVITIMGHVDHGKTRLLSVLQNIDINQTESGGITQHIGAYTIVYNSREITFLDTPGHEAFTMMRSRGAQVTDIVVLVVSAIDGVMPQTIEAINHAKEANVPIIVAINKIDLPDSNPDKIKHQLSEYDLVPEDWGGDTIFVLISALKNIGISELLDMILLQADMMLLKANPSKRAIGKVLDAKIDLGRGIVCSVIIEDGTLYVGDSFVGGACYGKVKALINDKGVSVKSVGPAKAISVLGFSSMPQAGDPFQVTKTEKEAKLISSKRQDLKKYESSKNVKKVTMLNLYDSIKEGTLKELKIILKADVQGSVEALKNSLEKLTNDEVRVRVVHSSAGVITETDISFASASDAIVIGFHVRPTVKAQILADQEKVEIRKYNVIYDAISDVKSVLEGMLEPDVEQQFIGFAEVRAVINVPKVGVIAGCYVSRGLIKRDAITNVMRDGLQIHSGKISSLKRFKDDVKEVAEQYECGIMIDNYANIKEGDIIEAFEVKKVKKTFKT</sequence>
<protein>
    <recommendedName>
        <fullName evidence="2">Translation initiation factor IF-2</fullName>
    </recommendedName>
</protein>
<accession>Q0SM50</accession>
<accession>G0IRY3</accession>
<proteinExistence type="inferred from homology"/>